<sequence length="247" mass="25804">MSSSIEIFPDSDILVAAAGKRLVGAIGAAVAARGQALIVLTGGGNGIALLRYLSAQAQQIEWSKVHLFWGDERYVPEDDDERNLKQARRALLNHVDIPSNQVHPMAASDGDFGGDLDAAALAYEQVLAASAAPGDPAPNFDVHLLGMGPEGHINSLFPHSPAVLESTRMVVAVDDSPKPPPRRITLTLPAIQRSREVWLLVSGPGKADAVAAAIGGADPVSVPAAGAVGRQNTLWLLDRDAAAKLPS</sequence>
<accession>P9WQP5</accession>
<accession>L0T9F2</accession>
<accession>O06814</accession>
<accession>P63338</accession>
<name>6PGL_MYCTU</name>
<comment type="function">
    <text evidence="1">Hydrolysis of 6-phosphogluconolactone to 6-phosphogluconate.</text>
</comment>
<comment type="catalytic activity">
    <reaction>
        <text>6-phospho-D-glucono-1,5-lactone + H2O = 6-phospho-D-gluconate + H(+)</text>
        <dbReference type="Rhea" id="RHEA:12556"/>
        <dbReference type="ChEBI" id="CHEBI:15377"/>
        <dbReference type="ChEBI" id="CHEBI:15378"/>
        <dbReference type="ChEBI" id="CHEBI:57955"/>
        <dbReference type="ChEBI" id="CHEBI:58759"/>
        <dbReference type="EC" id="3.1.1.31"/>
    </reaction>
</comment>
<comment type="pathway">
    <text>Carbohydrate degradation; pentose phosphate pathway; D-ribulose 5-phosphate from D-glucose 6-phosphate (oxidative stage): step 2/3.</text>
</comment>
<comment type="similarity">
    <text evidence="2">Belongs to the glucosamine/galactosamine-6-phosphate isomerase family. 6-phosphogluconolactonase subfamily.</text>
</comment>
<feature type="chain" id="PRO_0000090101" description="6-phosphogluconolactonase">
    <location>
        <begin position="1"/>
        <end position="247"/>
    </location>
</feature>
<feature type="strand" evidence="3">
    <location>
        <begin position="4"/>
        <end position="10"/>
    </location>
</feature>
<feature type="helix" evidence="3">
    <location>
        <begin position="11"/>
        <end position="33"/>
    </location>
</feature>
<feature type="strand" evidence="3">
    <location>
        <begin position="36"/>
        <end position="40"/>
    </location>
</feature>
<feature type="helix" evidence="3">
    <location>
        <begin position="44"/>
        <end position="56"/>
    </location>
</feature>
<feature type="helix" evidence="3">
    <location>
        <begin position="57"/>
        <end position="59"/>
    </location>
</feature>
<feature type="helix" evidence="3">
    <location>
        <begin position="62"/>
        <end position="64"/>
    </location>
</feature>
<feature type="strand" evidence="3">
    <location>
        <begin position="65"/>
        <end position="73"/>
    </location>
</feature>
<feature type="helix" evidence="3">
    <location>
        <begin position="83"/>
        <end position="90"/>
    </location>
</feature>
<feature type="helix" evidence="3">
    <location>
        <begin position="92"/>
        <end position="94"/>
    </location>
</feature>
<feature type="helix" evidence="3">
    <location>
        <begin position="99"/>
        <end position="101"/>
    </location>
</feature>
<feature type="turn" evidence="3">
    <location>
        <begin position="111"/>
        <end position="114"/>
    </location>
</feature>
<feature type="helix" evidence="3">
    <location>
        <begin position="116"/>
        <end position="130"/>
    </location>
</feature>
<feature type="strand" evidence="3">
    <location>
        <begin position="141"/>
        <end position="145"/>
    </location>
</feature>
<feature type="helix" evidence="3">
    <location>
        <begin position="161"/>
        <end position="164"/>
    </location>
</feature>
<feature type="strand" evidence="3">
    <location>
        <begin position="169"/>
        <end position="174"/>
    </location>
</feature>
<feature type="strand" evidence="3">
    <location>
        <begin position="177"/>
        <end position="181"/>
    </location>
</feature>
<feature type="strand" evidence="3">
    <location>
        <begin position="183"/>
        <end position="186"/>
    </location>
</feature>
<feature type="helix" evidence="3">
    <location>
        <begin position="188"/>
        <end position="191"/>
    </location>
</feature>
<feature type="strand" evidence="3">
    <location>
        <begin position="194"/>
        <end position="201"/>
    </location>
</feature>
<feature type="helix" evidence="3">
    <location>
        <begin position="204"/>
        <end position="206"/>
    </location>
</feature>
<feature type="helix" evidence="3">
    <location>
        <begin position="207"/>
        <end position="214"/>
    </location>
</feature>
<feature type="turn" evidence="3">
    <location>
        <begin position="219"/>
        <end position="221"/>
    </location>
</feature>
<feature type="helix" evidence="3">
    <location>
        <begin position="223"/>
        <end position="226"/>
    </location>
</feature>
<feature type="strand" evidence="3">
    <location>
        <begin position="230"/>
        <end position="238"/>
    </location>
</feature>
<feature type="helix" evidence="3">
    <location>
        <begin position="239"/>
        <end position="242"/>
    </location>
</feature>
<reference key="1">
    <citation type="journal article" date="1998" name="Nature">
        <title>Deciphering the biology of Mycobacterium tuberculosis from the complete genome sequence.</title>
        <authorList>
            <person name="Cole S.T."/>
            <person name="Brosch R."/>
            <person name="Parkhill J."/>
            <person name="Garnier T."/>
            <person name="Churcher C.M."/>
            <person name="Harris D.E."/>
            <person name="Gordon S.V."/>
            <person name="Eiglmeier K."/>
            <person name="Gas S."/>
            <person name="Barry C.E. III"/>
            <person name="Tekaia F."/>
            <person name="Badcock K."/>
            <person name="Basham D."/>
            <person name="Brown D."/>
            <person name="Chillingworth T."/>
            <person name="Connor R."/>
            <person name="Davies R.M."/>
            <person name="Devlin K."/>
            <person name="Feltwell T."/>
            <person name="Gentles S."/>
            <person name="Hamlin N."/>
            <person name="Holroyd S."/>
            <person name="Hornsby T."/>
            <person name="Jagels K."/>
            <person name="Krogh A."/>
            <person name="McLean J."/>
            <person name="Moule S."/>
            <person name="Murphy L.D."/>
            <person name="Oliver S."/>
            <person name="Osborne J."/>
            <person name="Quail M.A."/>
            <person name="Rajandream M.A."/>
            <person name="Rogers J."/>
            <person name="Rutter S."/>
            <person name="Seeger K."/>
            <person name="Skelton S."/>
            <person name="Squares S."/>
            <person name="Squares R."/>
            <person name="Sulston J.E."/>
            <person name="Taylor K."/>
            <person name="Whitehead S."/>
            <person name="Barrell B.G."/>
        </authorList>
    </citation>
    <scope>NUCLEOTIDE SEQUENCE [LARGE SCALE GENOMIC DNA]</scope>
    <source>
        <strain>ATCC 25618 / H37Rv</strain>
    </source>
</reference>
<reference key="2">
    <citation type="journal article" date="2011" name="Mol. Cell. Proteomics">
        <title>Proteogenomic analysis of Mycobacterium tuberculosis by high resolution mass spectrometry.</title>
        <authorList>
            <person name="Kelkar D.S."/>
            <person name="Kumar D."/>
            <person name="Kumar P."/>
            <person name="Balakrishnan L."/>
            <person name="Muthusamy B."/>
            <person name="Yadav A.K."/>
            <person name="Shrivastava P."/>
            <person name="Marimuthu A."/>
            <person name="Anand S."/>
            <person name="Sundaram H."/>
            <person name="Kingsbury R."/>
            <person name="Harsha H.C."/>
            <person name="Nair B."/>
            <person name="Prasad T.S."/>
            <person name="Chauhan D.S."/>
            <person name="Katoch K."/>
            <person name="Katoch V.M."/>
            <person name="Kumar P."/>
            <person name="Chaerkady R."/>
            <person name="Ramachandran S."/>
            <person name="Dash D."/>
            <person name="Pandey A."/>
        </authorList>
    </citation>
    <scope>IDENTIFICATION BY MASS SPECTROMETRY [LARGE SCALE ANALYSIS]</scope>
    <source>
        <strain>ATCC 25618 / H37Rv</strain>
    </source>
</reference>
<evidence type="ECO:0000250" key="1"/>
<evidence type="ECO:0000305" key="2"/>
<evidence type="ECO:0007829" key="3">
    <source>
        <dbReference type="PDB" id="3ICO"/>
    </source>
</evidence>
<proteinExistence type="evidence at protein level"/>
<dbReference type="EC" id="3.1.1.31"/>
<dbReference type="EMBL" id="AL123456">
    <property type="protein sequence ID" value="CCP44204.1"/>
    <property type="molecule type" value="Genomic_DNA"/>
</dbReference>
<dbReference type="PIR" id="H70916">
    <property type="entry name" value="H70916"/>
</dbReference>
<dbReference type="RefSeq" id="NP_215961.1">
    <property type="nucleotide sequence ID" value="NC_000962.3"/>
</dbReference>
<dbReference type="RefSeq" id="WP_003407433.1">
    <property type="nucleotide sequence ID" value="NZ_NVQJ01000071.1"/>
</dbReference>
<dbReference type="PDB" id="3ICO">
    <property type="method" value="X-ray"/>
    <property type="resolution" value="2.15 A"/>
    <property type="chains" value="A/B/C/D=1-247"/>
</dbReference>
<dbReference type="PDBsum" id="3ICO"/>
<dbReference type="SMR" id="P9WQP5"/>
<dbReference type="FunCoup" id="P9WQP5">
    <property type="interactions" value="445"/>
</dbReference>
<dbReference type="STRING" id="83332.Rv1445c"/>
<dbReference type="PaxDb" id="83332-Rv1445c"/>
<dbReference type="GeneID" id="886617"/>
<dbReference type="KEGG" id="mtu:Rv1445c"/>
<dbReference type="KEGG" id="mtv:RVBD_1445c"/>
<dbReference type="TubercuList" id="Rv1445c"/>
<dbReference type="eggNOG" id="COG0363">
    <property type="taxonomic scope" value="Bacteria"/>
</dbReference>
<dbReference type="InParanoid" id="P9WQP5"/>
<dbReference type="OrthoDB" id="9810967at2"/>
<dbReference type="PhylomeDB" id="P9WQP5"/>
<dbReference type="UniPathway" id="UPA00115">
    <property type="reaction ID" value="UER00409"/>
</dbReference>
<dbReference type="EvolutionaryTrace" id="P9WQP5"/>
<dbReference type="Proteomes" id="UP000001584">
    <property type="component" value="Chromosome"/>
</dbReference>
<dbReference type="GO" id="GO:0005886">
    <property type="term" value="C:plasma membrane"/>
    <property type="evidence" value="ECO:0007005"/>
    <property type="project" value="MTBBASE"/>
</dbReference>
<dbReference type="GO" id="GO:0017057">
    <property type="term" value="F:6-phosphogluconolactonase activity"/>
    <property type="evidence" value="ECO:0007669"/>
    <property type="project" value="UniProtKB-EC"/>
</dbReference>
<dbReference type="GO" id="GO:0005975">
    <property type="term" value="P:carbohydrate metabolic process"/>
    <property type="evidence" value="ECO:0007669"/>
    <property type="project" value="InterPro"/>
</dbReference>
<dbReference type="GO" id="GO:0006098">
    <property type="term" value="P:pentose-phosphate shunt"/>
    <property type="evidence" value="ECO:0007669"/>
    <property type="project" value="UniProtKB-UniPathway"/>
</dbReference>
<dbReference type="CDD" id="cd01400">
    <property type="entry name" value="6PGL"/>
    <property type="match status" value="1"/>
</dbReference>
<dbReference type="FunFam" id="3.40.50.1360:FF:000005">
    <property type="entry name" value="6-phosphogluconolactonase"/>
    <property type="match status" value="1"/>
</dbReference>
<dbReference type="Gene3D" id="3.40.50.1360">
    <property type="match status" value="1"/>
</dbReference>
<dbReference type="InterPro" id="IPR005900">
    <property type="entry name" value="6-phosphogluconolactonase_DevB"/>
</dbReference>
<dbReference type="InterPro" id="IPR006148">
    <property type="entry name" value="Glc/Gal-6P_isomerase"/>
</dbReference>
<dbReference type="InterPro" id="IPR037171">
    <property type="entry name" value="NagB/RpiA_transferase-like"/>
</dbReference>
<dbReference type="InterPro" id="IPR039104">
    <property type="entry name" value="PGLS"/>
</dbReference>
<dbReference type="NCBIfam" id="TIGR01198">
    <property type="entry name" value="pgl"/>
    <property type="match status" value="1"/>
</dbReference>
<dbReference type="PANTHER" id="PTHR11054">
    <property type="entry name" value="6-PHOSPHOGLUCONOLACTONASE"/>
    <property type="match status" value="1"/>
</dbReference>
<dbReference type="PANTHER" id="PTHR11054:SF0">
    <property type="entry name" value="6-PHOSPHOGLUCONOLACTONASE"/>
    <property type="match status" value="1"/>
</dbReference>
<dbReference type="Pfam" id="PF01182">
    <property type="entry name" value="Glucosamine_iso"/>
    <property type="match status" value="1"/>
</dbReference>
<dbReference type="SUPFAM" id="SSF100950">
    <property type="entry name" value="NagB/RpiA/CoA transferase-like"/>
    <property type="match status" value="1"/>
</dbReference>
<gene>
    <name type="primary">pgl</name>
    <name type="synonym">devB</name>
    <name type="ordered locus">Rv1445c</name>
    <name type="ORF">MTCY493.09</name>
</gene>
<protein>
    <recommendedName>
        <fullName>6-phosphogluconolactonase</fullName>
        <shortName>6PGL</shortName>
        <ecNumber>3.1.1.31</ecNumber>
    </recommendedName>
</protein>
<keyword id="KW-0002">3D-structure</keyword>
<keyword id="KW-0378">Hydrolase</keyword>
<keyword id="KW-1185">Reference proteome</keyword>
<organism>
    <name type="scientific">Mycobacterium tuberculosis (strain ATCC 25618 / H37Rv)</name>
    <dbReference type="NCBI Taxonomy" id="83332"/>
    <lineage>
        <taxon>Bacteria</taxon>
        <taxon>Bacillati</taxon>
        <taxon>Actinomycetota</taxon>
        <taxon>Actinomycetes</taxon>
        <taxon>Mycobacteriales</taxon>
        <taxon>Mycobacteriaceae</taxon>
        <taxon>Mycobacterium</taxon>
        <taxon>Mycobacterium tuberculosis complex</taxon>
    </lineage>
</organism>